<reference key="1">
    <citation type="journal article" date="2001" name="Nature">
        <title>Complete genome sequence of a multiple drug resistant Salmonella enterica serovar Typhi CT18.</title>
        <authorList>
            <person name="Parkhill J."/>
            <person name="Dougan G."/>
            <person name="James K.D."/>
            <person name="Thomson N.R."/>
            <person name="Pickard D."/>
            <person name="Wain J."/>
            <person name="Churcher C.M."/>
            <person name="Mungall K.L."/>
            <person name="Bentley S.D."/>
            <person name="Holden M.T.G."/>
            <person name="Sebaihia M."/>
            <person name="Baker S."/>
            <person name="Basham D."/>
            <person name="Brooks K."/>
            <person name="Chillingworth T."/>
            <person name="Connerton P."/>
            <person name="Cronin A."/>
            <person name="Davis P."/>
            <person name="Davies R.M."/>
            <person name="Dowd L."/>
            <person name="White N."/>
            <person name="Farrar J."/>
            <person name="Feltwell T."/>
            <person name="Hamlin N."/>
            <person name="Haque A."/>
            <person name="Hien T.T."/>
            <person name="Holroyd S."/>
            <person name="Jagels K."/>
            <person name="Krogh A."/>
            <person name="Larsen T.S."/>
            <person name="Leather S."/>
            <person name="Moule S."/>
            <person name="O'Gaora P."/>
            <person name="Parry C."/>
            <person name="Quail M.A."/>
            <person name="Rutherford K.M."/>
            <person name="Simmonds M."/>
            <person name="Skelton J."/>
            <person name="Stevens K."/>
            <person name="Whitehead S."/>
            <person name="Barrell B.G."/>
        </authorList>
    </citation>
    <scope>NUCLEOTIDE SEQUENCE [LARGE SCALE GENOMIC DNA]</scope>
    <source>
        <strain>CT18</strain>
    </source>
</reference>
<reference key="2">
    <citation type="journal article" date="2003" name="J. Bacteriol.">
        <title>Comparative genomics of Salmonella enterica serovar Typhi strains Ty2 and CT18.</title>
        <authorList>
            <person name="Deng W."/>
            <person name="Liou S.-R."/>
            <person name="Plunkett G. III"/>
            <person name="Mayhew G.F."/>
            <person name="Rose D.J."/>
            <person name="Burland V."/>
            <person name="Kodoyianni V."/>
            <person name="Schwartz D.C."/>
            <person name="Blattner F.R."/>
        </authorList>
    </citation>
    <scope>NUCLEOTIDE SEQUENCE [LARGE SCALE GENOMIC DNA]</scope>
    <source>
        <strain>ATCC 700931 / Ty2</strain>
    </source>
</reference>
<accession>P0A1F7</accession>
<accession>O08432</accession>
<accession>O33808</accession>
<accession>Q9L6M8</accession>
<dbReference type="EC" id="2.4.2.3" evidence="2"/>
<dbReference type="EMBL" id="AL513382">
    <property type="protein sequence ID" value="CAD07924.1"/>
    <property type="molecule type" value="Genomic_DNA"/>
</dbReference>
<dbReference type="EMBL" id="AE014613">
    <property type="protein sequence ID" value="AAO70857.1"/>
    <property type="molecule type" value="Genomic_DNA"/>
</dbReference>
<dbReference type="RefSeq" id="NP_457783.1">
    <property type="nucleotide sequence ID" value="NC_003198.1"/>
</dbReference>
<dbReference type="RefSeq" id="WP_000045169.1">
    <property type="nucleotide sequence ID" value="NZ_WSUR01000033.1"/>
</dbReference>
<dbReference type="SMR" id="P0A1F7"/>
<dbReference type="STRING" id="220341.gene:17587443"/>
<dbReference type="GeneID" id="66758248"/>
<dbReference type="KEGG" id="stt:t3329"/>
<dbReference type="KEGG" id="sty:STY3591"/>
<dbReference type="PATRIC" id="fig|220341.7.peg.3658"/>
<dbReference type="eggNOG" id="COG2820">
    <property type="taxonomic scope" value="Bacteria"/>
</dbReference>
<dbReference type="HOGENOM" id="CLU_068457_0_0_6"/>
<dbReference type="OMA" id="MSDVFHL"/>
<dbReference type="OrthoDB" id="5296640at2"/>
<dbReference type="UniPathway" id="UPA00574">
    <property type="reaction ID" value="UER00633"/>
</dbReference>
<dbReference type="Proteomes" id="UP000000541">
    <property type="component" value="Chromosome"/>
</dbReference>
<dbReference type="Proteomes" id="UP000002670">
    <property type="component" value="Chromosome"/>
</dbReference>
<dbReference type="GO" id="GO:0005829">
    <property type="term" value="C:cytosol"/>
    <property type="evidence" value="ECO:0007669"/>
    <property type="project" value="TreeGrafter"/>
</dbReference>
<dbReference type="GO" id="GO:0004850">
    <property type="term" value="F:uridine phosphorylase activity"/>
    <property type="evidence" value="ECO:0007669"/>
    <property type="project" value="UniProtKB-EC"/>
</dbReference>
<dbReference type="GO" id="GO:0009164">
    <property type="term" value="P:nucleoside catabolic process"/>
    <property type="evidence" value="ECO:0007669"/>
    <property type="project" value="UniProtKB-ARBA"/>
</dbReference>
<dbReference type="GO" id="GO:0009166">
    <property type="term" value="P:nucleotide catabolic process"/>
    <property type="evidence" value="ECO:0007669"/>
    <property type="project" value="InterPro"/>
</dbReference>
<dbReference type="GO" id="GO:0044206">
    <property type="term" value="P:UMP salvage"/>
    <property type="evidence" value="ECO:0007669"/>
    <property type="project" value="UniProtKB-UniPathway"/>
</dbReference>
<dbReference type="CDD" id="cd17767">
    <property type="entry name" value="UP_EcUdp-like"/>
    <property type="match status" value="1"/>
</dbReference>
<dbReference type="FunFam" id="3.40.50.1580:FF:000003">
    <property type="entry name" value="Uridine phosphorylase"/>
    <property type="match status" value="1"/>
</dbReference>
<dbReference type="Gene3D" id="3.40.50.1580">
    <property type="entry name" value="Nucleoside phosphorylase domain"/>
    <property type="match status" value="1"/>
</dbReference>
<dbReference type="InterPro" id="IPR018016">
    <property type="entry name" value="Nucleoside_phosphorylase_CS"/>
</dbReference>
<dbReference type="InterPro" id="IPR000845">
    <property type="entry name" value="Nucleoside_phosphorylase_d"/>
</dbReference>
<dbReference type="InterPro" id="IPR035994">
    <property type="entry name" value="Nucleoside_phosphorylase_sf"/>
</dbReference>
<dbReference type="InterPro" id="IPR010058">
    <property type="entry name" value="Uridine_phosphorylase"/>
</dbReference>
<dbReference type="NCBIfam" id="NF008383">
    <property type="entry name" value="PRK11178.1"/>
    <property type="match status" value="1"/>
</dbReference>
<dbReference type="NCBIfam" id="TIGR01718">
    <property type="entry name" value="Uridine-psphlse"/>
    <property type="match status" value="1"/>
</dbReference>
<dbReference type="PANTHER" id="PTHR43691:SF11">
    <property type="entry name" value="FI09636P-RELATED"/>
    <property type="match status" value="1"/>
</dbReference>
<dbReference type="PANTHER" id="PTHR43691">
    <property type="entry name" value="URIDINE PHOSPHORYLASE"/>
    <property type="match status" value="1"/>
</dbReference>
<dbReference type="Pfam" id="PF01048">
    <property type="entry name" value="PNP_UDP_1"/>
    <property type="match status" value="1"/>
</dbReference>
<dbReference type="SUPFAM" id="SSF53167">
    <property type="entry name" value="Purine and uridine phosphorylases"/>
    <property type="match status" value="1"/>
</dbReference>
<dbReference type="PROSITE" id="PS01232">
    <property type="entry name" value="PNP_UDP_1"/>
    <property type="match status" value="1"/>
</dbReference>
<feature type="initiator methionine" description="Removed" evidence="1">
    <location>
        <position position="1"/>
    </location>
</feature>
<feature type="chain" id="PRO_0000063184" description="Uridine phosphorylase">
    <location>
        <begin position="2"/>
        <end position="253"/>
    </location>
</feature>
<sequence>MSKSDVFHLGLTKNDLQGAQLAIVPGDPERVEKIAALMDKPVKLASHREFTSWRAELDGKAVIVCSTGIGGPSTSIAVEELAQLGIRTFLRIGTTGAIQPHINVGDVLVTTASVRLDGASLHFAPMEFPAVADFACTTALVEAAKSIGATTHVGVTASSDTFYPGQERYDTYSGRVVRRFKGSMEEWQAMGVMNYEMESATLLTMCASQGLRAGMVAGVIVNRTQQEIPNAETMKQTESHAVKIVVEAARRLL</sequence>
<gene>
    <name type="primary">udp</name>
    <name type="ordered locus">STY3591</name>
    <name type="ordered locus">t3329</name>
</gene>
<proteinExistence type="inferred from homology"/>
<evidence type="ECO:0000250" key="1"/>
<evidence type="ECO:0000250" key="2">
    <source>
        <dbReference type="UniProtKB" id="P12758"/>
    </source>
</evidence>
<evidence type="ECO:0000305" key="3"/>
<organism>
    <name type="scientific">Salmonella typhi</name>
    <dbReference type="NCBI Taxonomy" id="90370"/>
    <lineage>
        <taxon>Bacteria</taxon>
        <taxon>Pseudomonadati</taxon>
        <taxon>Pseudomonadota</taxon>
        <taxon>Gammaproteobacteria</taxon>
        <taxon>Enterobacterales</taxon>
        <taxon>Enterobacteriaceae</taxon>
        <taxon>Salmonella</taxon>
    </lineage>
</organism>
<comment type="function">
    <text evidence="2">Catalyzes the reversible phosphorylytic cleavage of uridine to uracil and ribose-1-phosphate.</text>
</comment>
<comment type="catalytic activity">
    <reaction evidence="2">
        <text>uridine + phosphate = alpha-D-ribose 1-phosphate + uracil</text>
        <dbReference type="Rhea" id="RHEA:24388"/>
        <dbReference type="ChEBI" id="CHEBI:16704"/>
        <dbReference type="ChEBI" id="CHEBI:17568"/>
        <dbReference type="ChEBI" id="CHEBI:43474"/>
        <dbReference type="ChEBI" id="CHEBI:57720"/>
        <dbReference type="EC" id="2.4.2.3"/>
    </reaction>
</comment>
<comment type="pathway">
    <text>Pyrimidine metabolism; UMP biosynthesis via salvage pathway; uracil from uridine (phosphorylase route): step 1/1.</text>
</comment>
<comment type="subunit">
    <text evidence="2">Homohexamer.</text>
</comment>
<comment type="subcellular location">
    <subcellularLocation>
        <location evidence="2">Cytoplasm</location>
    </subcellularLocation>
</comment>
<comment type="similarity">
    <text evidence="3">Belongs to the PNP/UDP phosphorylase family.</text>
</comment>
<name>UDP_SALTI</name>
<keyword id="KW-0963">Cytoplasm</keyword>
<keyword id="KW-0328">Glycosyltransferase</keyword>
<keyword id="KW-0808">Transferase</keyword>
<protein>
    <recommendedName>
        <fullName evidence="2">Uridine phosphorylase</fullName>
        <shortName evidence="2">UPase</shortName>
        <shortName evidence="2">UrdPase</shortName>
        <ecNumber evidence="2">2.4.2.3</ecNumber>
    </recommendedName>
</protein>